<comment type="function">
    <text evidence="1 5">Probable core component of the endosomal sorting required for transport complex III (ESCRT-III) which is involved in multivesicular bodies (MVBs) formation and sorting of endosomal cargo proteins into MVBs. MVBs contain intraluminal vesicles (ILVs) that are generated by invagination and scission from the limiting membrane of the endosome and mostly are delivered to lysosomes enabling degradation of membrane proteins, such as stimulated growth factor receptors, lysosomal enzymes and lipids. The MVB pathway appears to require the sequential function of ESCRT-O, -I,-II and -III complexes. ESCRT-III proteins mostly dissociate from the invaginating membrane before the ILV is released. The ESCRT machinery also functions in topologically equivalent membrane fission events, such as the terminal stages of cytokinesis. ESCRT-III proteins are believed to mediate the necessary vesicle extrusion and/or membrane fission activities, possibly in conjunction with the AAA ATPase VPS4. Selectively binds to phosphatidylinositol 3,5-bisphosphate PtdIns(3,5)P2 and PtdIns(3,4)P2 in preference to other phosphoinositides tested. Involved in late stages of cytokinesis. Plays a role in endosomal sorting/trafficking of EGF receptor (By similarity).</text>
</comment>
<comment type="subunit">
    <text evidence="1">Probable core component of the endosomal sorting required for transport complex III (ESCRT-III). ESCRT-III components are thought to multimerize to form a flat lattice on the perimeter membrane of the endosome. Several assembly forms of ESCRT-III may exist that interact and act sequentially. Forms a metastable monomer in solution; its core structure (without part of the putative autoinhibitory C-terminal acidic region) oligomerizes into a flat lattice via two different dimerization interfaces. In vitro, heteromerizes with CHMP2A (but not CHMP4) to form helical tubular structures that expose membrane-interacting sites on the outside whereas VPS4B can associate on the inside of the tubule. May interact with IGFBP7; the relevance of such interaction however remains unclear. Interacts with CHMP2A. Interacts with CHMP4A; the interaction requires the release of CHMP4A autoinhibition. Interacts with VPS4A. Interacts with STAMBP; the interaction appears to relieve the autoinhibition of CHMP3 (By similarity). Interacts with VTA1 (By similarity).</text>
</comment>
<comment type="subcellular location">
    <subcellularLocation>
        <location evidence="5">Cytoplasm</location>
        <location evidence="5">Cytosol</location>
    </subcellularLocation>
    <subcellularLocation>
        <location evidence="5">Membrane</location>
        <topology evidence="5">Lipid-anchor</topology>
    </subcellularLocation>
    <subcellularLocation>
        <location evidence="5">Endosome</location>
    </subcellularLocation>
    <subcellularLocation>
        <location evidence="1">Late endosome membrane</location>
    </subcellularLocation>
    <text evidence="1">Localizes to the midbody of dividing cells.</text>
</comment>
<comment type="domain">
    <text>The acidic C-terminus and the basic N-termminus are thought to render the protein in a closed, soluble and inactive conformation through an autoinhibitory intramolecular interaction. The open and active conformation, which enables membrane binding and oligomerization, is achieved by interaction with other cellular binding partners, probably including other ESCRT components.</text>
</comment>
<comment type="similarity">
    <text evidence="6">Belongs to the SNF7 family.</text>
</comment>
<gene>
    <name type="primary">Chmp3</name>
    <name type="synonym">Vps24</name>
</gene>
<protein>
    <recommendedName>
        <fullName>Charged multivesicular body protein 3</fullName>
    </recommendedName>
    <alternativeName>
        <fullName>Chromatin-modifying protein 3</fullName>
    </alternativeName>
    <alternativeName>
        <fullName>Vacuolar protein sorting-associated protein 24</fullName>
        <shortName>rVps24p</shortName>
    </alternativeName>
</protein>
<feature type="initiator methionine" description="Removed" evidence="3">
    <location>
        <position position="1"/>
    </location>
</feature>
<feature type="chain" id="PRO_0000211483" description="Charged multivesicular body protein 3">
    <location>
        <begin position="2"/>
        <end position="223"/>
    </location>
</feature>
<feature type="region of interest" description="Intramolecular interaction with C-terminus" evidence="1">
    <location>
        <begin position="2"/>
        <end position="113"/>
    </location>
</feature>
<feature type="region of interest" description="Important for autoinhibitory function" evidence="1">
    <location>
        <begin position="59"/>
        <end position="64"/>
    </location>
</feature>
<feature type="region of interest" description="Interaction with VPS4A" evidence="1">
    <location>
        <begin position="151"/>
        <end position="223"/>
    </location>
</feature>
<feature type="region of interest" description="Intramolecular interaction with N-terminus" evidence="1">
    <location>
        <begin position="151"/>
        <end position="221"/>
    </location>
</feature>
<feature type="region of interest" description="Important for autoinhibitory function" evidence="1">
    <location>
        <begin position="168"/>
        <end position="169"/>
    </location>
</feature>
<feature type="region of interest" description="Disordered" evidence="4">
    <location>
        <begin position="180"/>
        <end position="223"/>
    </location>
</feature>
<feature type="region of interest" description="Interaction with STAMBP" evidence="1">
    <location>
        <begin position="196"/>
        <end position="223"/>
    </location>
</feature>
<feature type="region of interest" description="Interaction with STAMBP">
    <location>
        <begin position="204"/>
        <end position="208"/>
    </location>
</feature>
<feature type="region of interest" description="Interaction with STAMBP">
    <location>
        <begin position="222"/>
        <end position="223"/>
    </location>
</feature>
<feature type="coiled-coil region" evidence="3">
    <location>
        <begin position="22"/>
        <end position="54"/>
    </location>
</feature>
<feature type="coiled-coil region" evidence="3">
    <location>
        <begin position="149"/>
        <end position="223"/>
    </location>
</feature>
<feature type="short sequence motif" description="MIT-interacting motif" evidence="1">
    <location>
        <begin position="201"/>
        <end position="212"/>
    </location>
</feature>
<feature type="compositionally biased region" description="Acidic residues" evidence="4">
    <location>
        <begin position="201"/>
        <end position="212"/>
    </location>
</feature>
<feature type="site" description="Important for autoinhibitory function" evidence="1">
    <location>
        <position position="48"/>
    </location>
</feature>
<feature type="site" description="Interaction with STAMBP" evidence="1">
    <location>
        <position position="217"/>
    </location>
</feature>
<feature type="modified residue" description="Phosphoserine" evidence="7">
    <location>
        <position position="200"/>
    </location>
</feature>
<feature type="lipid moiety-binding region" description="N-myristoyl glycine" evidence="3">
    <location>
        <position position="2"/>
    </location>
</feature>
<feature type="cross-link" description="Glycyl lysine isopeptide (Lys-Gly) (interchain with G-Cter in ubiquitin)" evidence="2">
    <location>
        <position position="179"/>
    </location>
</feature>
<feature type="mutagenesis site" description="Strongly reduces binding to PtdIns(3,5)P2." evidence="5">
    <original>K</original>
    <variation>D</variation>
    <location>
        <position position="49"/>
    </location>
</feature>
<name>CHMP3_RAT</name>
<accession>Q8CGS4</accession>
<dbReference type="EMBL" id="AY150169">
    <property type="protein sequence ID" value="AAN74982.1"/>
    <property type="molecule type" value="mRNA"/>
</dbReference>
<dbReference type="RefSeq" id="NP_758834.1">
    <property type="nucleotide sequence ID" value="NM_172331.1"/>
</dbReference>
<dbReference type="SMR" id="Q8CGS4"/>
<dbReference type="FunCoup" id="Q8CGS4">
    <property type="interactions" value="3088"/>
</dbReference>
<dbReference type="STRING" id="10116.ENSRNOP00000010253"/>
<dbReference type="iPTMnet" id="Q8CGS4"/>
<dbReference type="PhosphoSitePlus" id="Q8CGS4"/>
<dbReference type="jPOST" id="Q8CGS4"/>
<dbReference type="PaxDb" id="10116-ENSRNOP00000010253"/>
<dbReference type="Ensembl" id="ENSRNOT00000010253.5">
    <property type="protein sequence ID" value="ENSRNOP00000010253.2"/>
    <property type="gene ID" value="ENSRNOG00000007356.5"/>
</dbReference>
<dbReference type="GeneID" id="282834"/>
<dbReference type="KEGG" id="rno:282834"/>
<dbReference type="UCSC" id="RGD:708556">
    <property type="organism name" value="rat"/>
</dbReference>
<dbReference type="AGR" id="RGD:708556"/>
<dbReference type="CTD" id="51652"/>
<dbReference type="RGD" id="708556">
    <property type="gene designation" value="Chmp3"/>
</dbReference>
<dbReference type="eggNOG" id="KOG3229">
    <property type="taxonomic scope" value="Eukaryota"/>
</dbReference>
<dbReference type="GeneTree" id="ENSGT00950000182832"/>
<dbReference type="HOGENOM" id="CLU_069208_0_1_1"/>
<dbReference type="InParanoid" id="Q8CGS4"/>
<dbReference type="OMA" id="KILWEVT"/>
<dbReference type="OrthoDB" id="2329734at2759"/>
<dbReference type="PhylomeDB" id="Q8CGS4"/>
<dbReference type="TreeFam" id="TF105848"/>
<dbReference type="Reactome" id="R-RNO-1632852">
    <property type="pathway name" value="Macroautophagy"/>
</dbReference>
<dbReference type="Reactome" id="R-RNO-5620971">
    <property type="pathway name" value="Pyroptosis"/>
</dbReference>
<dbReference type="Reactome" id="R-RNO-917729">
    <property type="pathway name" value="Endosomal Sorting Complex Required For Transport (ESCRT)"/>
</dbReference>
<dbReference type="Reactome" id="R-RNO-9668328">
    <property type="pathway name" value="Sealing of the nuclear envelope (NE) by ESCRT-III"/>
</dbReference>
<dbReference type="PRO" id="PR:Q8CGS4"/>
<dbReference type="Proteomes" id="UP000002494">
    <property type="component" value="Chromosome 4"/>
</dbReference>
<dbReference type="Bgee" id="ENSRNOG00000007356">
    <property type="expression patterns" value="Expressed in lung and 19 other cell types or tissues"/>
</dbReference>
<dbReference type="GO" id="GO:1904930">
    <property type="term" value="C:amphisome membrane"/>
    <property type="evidence" value="ECO:0000266"/>
    <property type="project" value="RGD"/>
</dbReference>
<dbReference type="GO" id="GO:0000421">
    <property type="term" value="C:autophagosome membrane"/>
    <property type="evidence" value="ECO:0000266"/>
    <property type="project" value="RGD"/>
</dbReference>
<dbReference type="GO" id="GO:0031410">
    <property type="term" value="C:cytoplasmic vesicle"/>
    <property type="evidence" value="ECO:0000266"/>
    <property type="project" value="RGD"/>
</dbReference>
<dbReference type="GO" id="GO:0005829">
    <property type="term" value="C:cytosol"/>
    <property type="evidence" value="ECO:0007669"/>
    <property type="project" value="UniProtKB-SubCell"/>
</dbReference>
<dbReference type="GO" id="GO:0005769">
    <property type="term" value="C:early endosome"/>
    <property type="evidence" value="ECO:0000314"/>
    <property type="project" value="RGD"/>
</dbReference>
<dbReference type="GO" id="GO:0000815">
    <property type="term" value="C:ESCRT III complex"/>
    <property type="evidence" value="ECO:0000266"/>
    <property type="project" value="RGD"/>
</dbReference>
<dbReference type="GO" id="GO:0000776">
    <property type="term" value="C:kinetochore"/>
    <property type="evidence" value="ECO:0000266"/>
    <property type="project" value="RGD"/>
</dbReference>
<dbReference type="GO" id="GO:0005828">
    <property type="term" value="C:kinetochore microtubule"/>
    <property type="evidence" value="ECO:0000266"/>
    <property type="project" value="RGD"/>
</dbReference>
<dbReference type="GO" id="GO:0005770">
    <property type="term" value="C:late endosome"/>
    <property type="evidence" value="ECO:0000314"/>
    <property type="project" value="RGD"/>
</dbReference>
<dbReference type="GO" id="GO:0005765">
    <property type="term" value="C:lysosomal membrane"/>
    <property type="evidence" value="ECO:0000266"/>
    <property type="project" value="RGD"/>
</dbReference>
<dbReference type="GO" id="GO:0030496">
    <property type="term" value="C:midbody"/>
    <property type="evidence" value="ECO:0000314"/>
    <property type="project" value="RGD"/>
</dbReference>
<dbReference type="GO" id="GO:0005771">
    <property type="term" value="C:multivesicular body"/>
    <property type="evidence" value="ECO:0000318"/>
    <property type="project" value="GO_Central"/>
</dbReference>
<dbReference type="GO" id="GO:0032585">
    <property type="term" value="C:multivesicular body membrane"/>
    <property type="evidence" value="ECO:0000266"/>
    <property type="project" value="RGD"/>
</dbReference>
<dbReference type="GO" id="GO:0005643">
    <property type="term" value="C:nuclear pore"/>
    <property type="evidence" value="ECO:0000266"/>
    <property type="project" value="RGD"/>
</dbReference>
<dbReference type="GO" id="GO:0005886">
    <property type="term" value="C:plasma membrane"/>
    <property type="evidence" value="ECO:0000266"/>
    <property type="project" value="RGD"/>
</dbReference>
<dbReference type="GO" id="GO:0140678">
    <property type="term" value="F:molecular function inhibitor activity"/>
    <property type="evidence" value="ECO:0000266"/>
    <property type="project" value="RGD"/>
</dbReference>
<dbReference type="GO" id="GO:0031210">
    <property type="term" value="F:phosphatidylcholine binding"/>
    <property type="evidence" value="ECO:0000266"/>
    <property type="project" value="RGD"/>
</dbReference>
<dbReference type="GO" id="GO:0005546">
    <property type="term" value="F:phosphatidylinositol-4,5-bisphosphate binding"/>
    <property type="evidence" value="ECO:0000315"/>
    <property type="project" value="RGD"/>
</dbReference>
<dbReference type="GO" id="GO:1990381">
    <property type="term" value="F:ubiquitin-specific protease binding"/>
    <property type="evidence" value="ECO:0000266"/>
    <property type="project" value="RGD"/>
</dbReference>
<dbReference type="GO" id="GO:0097352">
    <property type="term" value="P:autophagosome maturation"/>
    <property type="evidence" value="ECO:0000266"/>
    <property type="project" value="RGD"/>
</dbReference>
<dbReference type="GO" id="GO:0006914">
    <property type="term" value="P:autophagy"/>
    <property type="evidence" value="ECO:0000266"/>
    <property type="project" value="RGD"/>
</dbReference>
<dbReference type="GO" id="GO:0008333">
    <property type="term" value="P:endosome to lysosome transport"/>
    <property type="evidence" value="ECO:0000315"/>
    <property type="project" value="RGD"/>
</dbReference>
<dbReference type="GO" id="GO:0032509">
    <property type="term" value="P:endosome transport via multivesicular body sorting pathway"/>
    <property type="evidence" value="ECO:0000318"/>
    <property type="project" value="GO_Central"/>
</dbReference>
<dbReference type="GO" id="GO:1902774">
    <property type="term" value="P:late endosome to lysosome transport"/>
    <property type="evidence" value="ECO:0000266"/>
    <property type="project" value="RGD"/>
</dbReference>
<dbReference type="GO" id="GO:0045324">
    <property type="term" value="P:late endosome to vacuole transport"/>
    <property type="evidence" value="ECO:0000318"/>
    <property type="project" value="GO_Central"/>
</dbReference>
<dbReference type="GO" id="GO:0061952">
    <property type="term" value="P:midbody abscission"/>
    <property type="evidence" value="ECO:0000266"/>
    <property type="project" value="RGD"/>
</dbReference>
<dbReference type="GO" id="GO:0007080">
    <property type="term" value="P:mitotic metaphase chromosome alignment"/>
    <property type="evidence" value="ECO:0000266"/>
    <property type="project" value="RGD"/>
</dbReference>
<dbReference type="GO" id="GO:0071985">
    <property type="term" value="P:multivesicular body sorting pathway"/>
    <property type="evidence" value="ECO:0000266"/>
    <property type="project" value="RGD"/>
</dbReference>
<dbReference type="GO" id="GO:0061763">
    <property type="term" value="P:multivesicular body-lysosome fusion"/>
    <property type="evidence" value="ECO:0000266"/>
    <property type="project" value="RGD"/>
</dbReference>
<dbReference type="GO" id="GO:0031468">
    <property type="term" value="P:nuclear membrane reassembly"/>
    <property type="evidence" value="ECO:0000266"/>
    <property type="project" value="RGD"/>
</dbReference>
<dbReference type="GO" id="GO:0006997">
    <property type="term" value="P:nucleus organization"/>
    <property type="evidence" value="ECO:0000266"/>
    <property type="project" value="RGD"/>
</dbReference>
<dbReference type="GO" id="GO:0001778">
    <property type="term" value="P:plasma membrane repair"/>
    <property type="evidence" value="ECO:0000266"/>
    <property type="project" value="RGD"/>
</dbReference>
<dbReference type="GO" id="GO:0032467">
    <property type="term" value="P:positive regulation of cytokinesis"/>
    <property type="evidence" value="ECO:0000315"/>
    <property type="project" value="RGD"/>
</dbReference>
<dbReference type="GO" id="GO:0051258">
    <property type="term" value="P:protein polymerization"/>
    <property type="evidence" value="ECO:0000266"/>
    <property type="project" value="RGD"/>
</dbReference>
<dbReference type="GO" id="GO:0015031">
    <property type="term" value="P:protein transport"/>
    <property type="evidence" value="ECO:0000318"/>
    <property type="project" value="GO_Central"/>
</dbReference>
<dbReference type="GO" id="GO:0010824">
    <property type="term" value="P:regulation of centrosome duplication"/>
    <property type="evidence" value="ECO:0000266"/>
    <property type="project" value="RGD"/>
</dbReference>
<dbReference type="GO" id="GO:2000641">
    <property type="term" value="P:regulation of early endosome to late endosome transport"/>
    <property type="evidence" value="ECO:0000266"/>
    <property type="project" value="RGD"/>
</dbReference>
<dbReference type="GO" id="GO:0051036">
    <property type="term" value="P:regulation of endosome size"/>
    <property type="evidence" value="ECO:0000315"/>
    <property type="project" value="RGD"/>
</dbReference>
<dbReference type="GO" id="GO:1901673">
    <property type="term" value="P:regulation of mitotic spindle assembly"/>
    <property type="evidence" value="ECO:0000266"/>
    <property type="project" value="RGD"/>
</dbReference>
<dbReference type="GO" id="GO:0044790">
    <property type="term" value="P:suppression of viral release by host"/>
    <property type="evidence" value="ECO:0007669"/>
    <property type="project" value="Ensembl"/>
</dbReference>
<dbReference type="GO" id="GO:0043162">
    <property type="term" value="P:ubiquitin-dependent protein catabolic process via the multivesicular body sorting pathway"/>
    <property type="evidence" value="ECO:0000266"/>
    <property type="project" value="RGD"/>
</dbReference>
<dbReference type="GO" id="GO:0046761">
    <property type="term" value="P:viral budding from plasma membrane"/>
    <property type="evidence" value="ECO:0000266"/>
    <property type="project" value="RGD"/>
</dbReference>
<dbReference type="GO" id="GO:0039702">
    <property type="term" value="P:viral budding via host ESCRT complex"/>
    <property type="evidence" value="ECO:0000266"/>
    <property type="project" value="RGD"/>
</dbReference>
<dbReference type="Gene3D" id="6.10.140.1230">
    <property type="match status" value="1"/>
</dbReference>
<dbReference type="InterPro" id="IPR005024">
    <property type="entry name" value="Snf7_fam"/>
</dbReference>
<dbReference type="PANTHER" id="PTHR10476">
    <property type="entry name" value="CHARGED MULTIVESICULAR BODY PROTEIN"/>
    <property type="match status" value="1"/>
</dbReference>
<dbReference type="Pfam" id="PF03357">
    <property type="entry name" value="Snf7"/>
    <property type="match status" value="1"/>
</dbReference>
<keyword id="KW-0131">Cell cycle</keyword>
<keyword id="KW-0132">Cell division</keyword>
<keyword id="KW-0175">Coiled coil</keyword>
<keyword id="KW-0963">Cytoplasm</keyword>
<keyword id="KW-0967">Endosome</keyword>
<keyword id="KW-1017">Isopeptide bond</keyword>
<keyword id="KW-0449">Lipoprotein</keyword>
<keyword id="KW-0472">Membrane</keyword>
<keyword id="KW-0519">Myristate</keyword>
<keyword id="KW-0597">Phosphoprotein</keyword>
<keyword id="KW-0653">Protein transport</keyword>
<keyword id="KW-1185">Reference proteome</keyword>
<keyword id="KW-0813">Transport</keyword>
<keyword id="KW-0832">Ubl conjugation</keyword>
<organism>
    <name type="scientific">Rattus norvegicus</name>
    <name type="common">Rat</name>
    <dbReference type="NCBI Taxonomy" id="10116"/>
    <lineage>
        <taxon>Eukaryota</taxon>
        <taxon>Metazoa</taxon>
        <taxon>Chordata</taxon>
        <taxon>Craniata</taxon>
        <taxon>Vertebrata</taxon>
        <taxon>Euteleostomi</taxon>
        <taxon>Mammalia</taxon>
        <taxon>Eutheria</taxon>
        <taxon>Euarchontoglires</taxon>
        <taxon>Glires</taxon>
        <taxon>Rodentia</taxon>
        <taxon>Myomorpha</taxon>
        <taxon>Muroidea</taxon>
        <taxon>Muridae</taxon>
        <taxon>Murinae</taxon>
        <taxon>Rattus</taxon>
    </lineage>
</organism>
<evidence type="ECO:0000250" key="1"/>
<evidence type="ECO:0000250" key="2">
    <source>
        <dbReference type="UniProtKB" id="Q9Y3E7"/>
    </source>
</evidence>
<evidence type="ECO:0000255" key="3"/>
<evidence type="ECO:0000256" key="4">
    <source>
        <dbReference type="SAM" id="MobiDB-lite"/>
    </source>
</evidence>
<evidence type="ECO:0000269" key="5">
    <source>
    </source>
</evidence>
<evidence type="ECO:0000305" key="6"/>
<evidence type="ECO:0007744" key="7">
    <source>
    </source>
</evidence>
<reference key="1">
    <citation type="journal article" date="2003" name="J. Biol. Chem.">
        <title>Identification of mammalian Vps24p as an effector of phosphatidylinositol 3,5-bisphosphate-dependent endosome compartmentalization.</title>
        <authorList>
            <person name="Whitley P."/>
            <person name="Reaves B.J."/>
            <person name="Hashimoto M."/>
            <person name="Riley A.M."/>
            <person name="Potter B.V.L."/>
            <person name="Holman G.D."/>
        </authorList>
    </citation>
    <scope>NUCLEOTIDE SEQUENCE [MRNA]</scope>
    <scope>FUNCTION</scope>
    <scope>SUBCELLULAR LOCATION</scope>
    <scope>MUTAGENESIS OF LYS-49</scope>
    <source>
        <strain>Wistar</strain>
    </source>
</reference>
<reference key="2">
    <citation type="journal article" date="2012" name="Nat. Commun.">
        <title>Quantitative maps of protein phosphorylation sites across 14 different rat organs and tissues.</title>
        <authorList>
            <person name="Lundby A."/>
            <person name="Secher A."/>
            <person name="Lage K."/>
            <person name="Nordsborg N.B."/>
            <person name="Dmytriyev A."/>
            <person name="Lundby C."/>
            <person name="Olsen J.V."/>
        </authorList>
    </citation>
    <scope>PHOSPHORYLATION [LARGE SCALE ANALYSIS] AT SER-200</scope>
    <scope>IDENTIFICATION BY MASS SPECTROMETRY [LARGE SCALE ANALYSIS]</scope>
</reference>
<proteinExistence type="evidence at protein level"/>
<sequence length="223" mass="25062">MGLFGKTQEKPPKELVNEWSLKIRKEMRVVDRQIRDIQREEEKVKRSVKDAAKKGQKEVCVVLAKEMIRSRKAVSKLYASKAHMNSVLMGMKNQLAVLRVAGSLQKSTEVMKAMQSLVKIPEIQATMRELSKEMMKAGIIEEMLEDTFESMDDQEEMEEAAEMEIDRILFEITAGALGKAPSKVTDALPEPEPAGAMAASEGDEEDDEEDLEAMQSRLATLRS</sequence>